<comment type="function">
    <text evidence="1">Acts as a transcriptional activator. Promotes cell proliferation by facilitating the cell cycle phase transition from the S to G2/M phase. Involved in both the hemin- and phorbol myristate acetate (PMA)-induced erythroid and megakaryocytic differentiation, respectively. Also plays a role as an inhibitor of cell apoptosis (By similarity).</text>
</comment>
<comment type="subunit">
    <text evidence="1">Interacts with INCA1; the interaction inhibits INCA1 activity and induces the cell cycle process.</text>
</comment>
<comment type="subcellular location">
    <subcellularLocation>
        <location evidence="1">Nucleus</location>
    </subcellularLocation>
</comment>
<comment type="similarity">
    <text evidence="5">Belongs to the krueppel C2H2-type zinc-finger protein family.</text>
</comment>
<protein>
    <recommendedName>
        <fullName>Zinc finger protein 16</fullName>
    </recommendedName>
</protein>
<gene>
    <name type="primary">ZNF16</name>
</gene>
<dbReference type="EMBL" id="DQ976502">
    <property type="protein sequence ID" value="ABM46730.1"/>
    <property type="molecule type" value="Genomic_DNA"/>
</dbReference>
<dbReference type="RefSeq" id="XP_004047778.1">
    <property type="nucleotide sequence ID" value="XM_004047730.5"/>
</dbReference>
<dbReference type="RefSeq" id="XP_055204612.1">
    <property type="nucleotide sequence ID" value="XM_055348637.2"/>
</dbReference>
<dbReference type="RefSeq" id="XP_063565028.1">
    <property type="nucleotide sequence ID" value="XM_063708958.1"/>
</dbReference>
<dbReference type="SMR" id="A1YF12"/>
<dbReference type="STRING" id="9593.ENSGGOP00000001176"/>
<dbReference type="Ensembl" id="ENSGGOT00000001200.3">
    <property type="protein sequence ID" value="ENSGGOP00000001176.2"/>
    <property type="gene ID" value="ENSGGOG00000001192.3"/>
</dbReference>
<dbReference type="GeneID" id="101128383"/>
<dbReference type="CTD" id="7564"/>
<dbReference type="eggNOG" id="KOG1721">
    <property type="taxonomic scope" value="Eukaryota"/>
</dbReference>
<dbReference type="GeneTree" id="ENSGT00940000163050"/>
<dbReference type="HOGENOM" id="CLU_002678_44_5_1"/>
<dbReference type="InParanoid" id="A1YF12"/>
<dbReference type="OMA" id="PWIPAAQ"/>
<dbReference type="Proteomes" id="UP000001519">
    <property type="component" value="Chromosome 8"/>
</dbReference>
<dbReference type="Bgee" id="ENSGGOG00000001192">
    <property type="expression patterns" value="Expressed in heart and 6 other cell types or tissues"/>
</dbReference>
<dbReference type="GO" id="GO:0005730">
    <property type="term" value="C:nucleolus"/>
    <property type="evidence" value="ECO:0007669"/>
    <property type="project" value="Ensembl"/>
</dbReference>
<dbReference type="GO" id="GO:0005654">
    <property type="term" value="C:nucleoplasm"/>
    <property type="evidence" value="ECO:0007669"/>
    <property type="project" value="Ensembl"/>
</dbReference>
<dbReference type="GO" id="GO:0005634">
    <property type="term" value="C:nucleus"/>
    <property type="evidence" value="ECO:0000250"/>
    <property type="project" value="UniProtKB"/>
</dbReference>
<dbReference type="GO" id="GO:0001228">
    <property type="term" value="F:DNA-binding transcription activator activity, RNA polymerase II-specific"/>
    <property type="evidence" value="ECO:0000318"/>
    <property type="project" value="GO_Central"/>
</dbReference>
<dbReference type="GO" id="GO:0000978">
    <property type="term" value="F:RNA polymerase II cis-regulatory region sequence-specific DNA binding"/>
    <property type="evidence" value="ECO:0000318"/>
    <property type="project" value="GO_Central"/>
</dbReference>
<dbReference type="GO" id="GO:0008270">
    <property type="term" value="F:zinc ion binding"/>
    <property type="evidence" value="ECO:0007669"/>
    <property type="project" value="UniProtKB-KW"/>
</dbReference>
<dbReference type="GO" id="GO:0051301">
    <property type="term" value="P:cell division"/>
    <property type="evidence" value="ECO:0007669"/>
    <property type="project" value="UniProtKB-KW"/>
</dbReference>
<dbReference type="GO" id="GO:0072707">
    <property type="term" value="P:cellular response to sodium dodecyl sulfate"/>
    <property type="evidence" value="ECO:0000250"/>
    <property type="project" value="UniProtKB"/>
</dbReference>
<dbReference type="GO" id="GO:0043066">
    <property type="term" value="P:negative regulation of apoptotic process"/>
    <property type="evidence" value="ECO:0000250"/>
    <property type="project" value="UniProtKB"/>
</dbReference>
<dbReference type="GO" id="GO:1901989">
    <property type="term" value="P:positive regulation of cell cycle phase transition"/>
    <property type="evidence" value="ECO:0000250"/>
    <property type="project" value="UniProtKB"/>
</dbReference>
<dbReference type="GO" id="GO:0051781">
    <property type="term" value="P:positive regulation of cell division"/>
    <property type="evidence" value="ECO:0007669"/>
    <property type="project" value="UniProtKB-KW"/>
</dbReference>
<dbReference type="GO" id="GO:0008284">
    <property type="term" value="P:positive regulation of cell population proliferation"/>
    <property type="evidence" value="ECO:0000250"/>
    <property type="project" value="UniProtKB"/>
</dbReference>
<dbReference type="GO" id="GO:0045648">
    <property type="term" value="P:positive regulation of erythrocyte differentiation"/>
    <property type="evidence" value="ECO:0000250"/>
    <property type="project" value="UniProtKB"/>
</dbReference>
<dbReference type="GO" id="GO:0033674">
    <property type="term" value="P:positive regulation of kinase activity"/>
    <property type="evidence" value="ECO:0000250"/>
    <property type="project" value="UniProtKB"/>
</dbReference>
<dbReference type="GO" id="GO:0045654">
    <property type="term" value="P:positive regulation of megakaryocyte differentiation"/>
    <property type="evidence" value="ECO:0000250"/>
    <property type="project" value="UniProtKB"/>
</dbReference>
<dbReference type="GO" id="GO:0006357">
    <property type="term" value="P:regulation of transcription by RNA polymerase II"/>
    <property type="evidence" value="ECO:0000318"/>
    <property type="project" value="GO_Central"/>
</dbReference>
<dbReference type="FunFam" id="3.30.160.60:FF:000478">
    <property type="entry name" value="Zinc finger protein 133"/>
    <property type="match status" value="1"/>
</dbReference>
<dbReference type="FunFam" id="3.30.160.60:FF:000914">
    <property type="entry name" value="Zinc finger protein 16"/>
    <property type="match status" value="3"/>
</dbReference>
<dbReference type="FunFam" id="3.30.160.60:FF:001618">
    <property type="entry name" value="Zinc finger protein 16"/>
    <property type="match status" value="1"/>
</dbReference>
<dbReference type="FunFam" id="3.30.160.60:FF:001658">
    <property type="entry name" value="Zinc finger protein 16"/>
    <property type="match status" value="2"/>
</dbReference>
<dbReference type="FunFam" id="3.30.160.60:FF:001901">
    <property type="entry name" value="Zinc finger protein 16"/>
    <property type="match status" value="1"/>
</dbReference>
<dbReference type="FunFam" id="3.30.160.60:FF:001903">
    <property type="entry name" value="Zinc finger protein 16"/>
    <property type="match status" value="1"/>
</dbReference>
<dbReference type="FunFam" id="3.30.160.60:FF:002463">
    <property type="entry name" value="Zinc finger protein 16"/>
    <property type="match status" value="1"/>
</dbReference>
<dbReference type="FunFam" id="3.30.160.60:FF:000274">
    <property type="entry name" value="zinc finger protein 16"/>
    <property type="match status" value="1"/>
</dbReference>
<dbReference type="FunFam" id="3.30.160.60:FF:000824">
    <property type="entry name" value="Zinc finger protein 184"/>
    <property type="match status" value="1"/>
</dbReference>
<dbReference type="FunFam" id="3.30.160.60:FF:001298">
    <property type="entry name" value="zinc finger protein 23 isoform X1"/>
    <property type="match status" value="1"/>
</dbReference>
<dbReference type="FunFam" id="3.30.160.60:FF:000269">
    <property type="entry name" value="Zinc finger protein 287"/>
    <property type="match status" value="1"/>
</dbReference>
<dbReference type="FunFam" id="3.30.160.60:FF:000352">
    <property type="entry name" value="zinc finger protein 3 homolog"/>
    <property type="match status" value="1"/>
</dbReference>
<dbReference type="FunFam" id="3.30.160.60:FF:002090">
    <property type="entry name" value="Zinc finger protein 473"/>
    <property type="match status" value="1"/>
</dbReference>
<dbReference type="FunFam" id="3.30.160.60:FF:000330">
    <property type="entry name" value="Zinc finger with KRAB and SCAN domains 1"/>
    <property type="match status" value="1"/>
</dbReference>
<dbReference type="Gene3D" id="3.30.160.60">
    <property type="entry name" value="Classic Zinc Finger"/>
    <property type="match status" value="17"/>
</dbReference>
<dbReference type="InterPro" id="IPR050331">
    <property type="entry name" value="Zinc_finger"/>
</dbReference>
<dbReference type="InterPro" id="IPR036236">
    <property type="entry name" value="Znf_C2H2_sf"/>
</dbReference>
<dbReference type="InterPro" id="IPR013087">
    <property type="entry name" value="Znf_C2H2_type"/>
</dbReference>
<dbReference type="PANTHER" id="PTHR16515">
    <property type="entry name" value="PR DOMAIN ZINC FINGER PROTEIN"/>
    <property type="match status" value="1"/>
</dbReference>
<dbReference type="PANTHER" id="PTHR16515:SF51">
    <property type="entry name" value="ZINC FINGER PROTEIN 833-RELATED"/>
    <property type="match status" value="1"/>
</dbReference>
<dbReference type="Pfam" id="PF00096">
    <property type="entry name" value="zf-C2H2"/>
    <property type="match status" value="16"/>
</dbReference>
<dbReference type="SMART" id="SM00355">
    <property type="entry name" value="ZnF_C2H2"/>
    <property type="match status" value="17"/>
</dbReference>
<dbReference type="SUPFAM" id="SSF57667">
    <property type="entry name" value="beta-beta-alpha zinc fingers"/>
    <property type="match status" value="9"/>
</dbReference>
<dbReference type="PROSITE" id="PS00028">
    <property type="entry name" value="ZINC_FINGER_C2H2_1"/>
    <property type="match status" value="16"/>
</dbReference>
<dbReference type="PROSITE" id="PS50157">
    <property type="entry name" value="ZINC_FINGER_C2H2_2"/>
    <property type="match status" value="17"/>
</dbReference>
<accession>A1YF12</accession>
<feature type="chain" id="PRO_0000285465" description="Zinc finger protein 16">
    <location>
        <begin position="1"/>
        <end position="682"/>
    </location>
</feature>
<feature type="zinc finger region" description="C2H2-type 1; degenerate" evidence="3">
    <location>
        <begin position="209"/>
        <end position="231"/>
    </location>
</feature>
<feature type="zinc finger region" description="C2H2-type 2; degenerate" evidence="3">
    <location>
        <begin position="237"/>
        <end position="259"/>
    </location>
</feature>
<feature type="zinc finger region" description="C2H2-type 3" evidence="3">
    <location>
        <begin position="265"/>
        <end position="287"/>
    </location>
</feature>
<feature type="zinc finger region" description="C2H2-type 4" evidence="3">
    <location>
        <begin position="293"/>
        <end position="315"/>
    </location>
</feature>
<feature type="zinc finger region" description="C2H2-type 5" evidence="3">
    <location>
        <begin position="321"/>
        <end position="343"/>
    </location>
</feature>
<feature type="zinc finger region" description="C2H2-type 6" evidence="3">
    <location>
        <begin position="349"/>
        <end position="371"/>
    </location>
</feature>
<feature type="zinc finger region" description="C2H2-type 7" evidence="3">
    <location>
        <begin position="377"/>
        <end position="399"/>
    </location>
</feature>
<feature type="zinc finger region" description="C2H2-type 8" evidence="3">
    <location>
        <begin position="405"/>
        <end position="427"/>
    </location>
</feature>
<feature type="zinc finger region" description="C2H2-type 9" evidence="3">
    <location>
        <begin position="433"/>
        <end position="455"/>
    </location>
</feature>
<feature type="zinc finger region" description="C2H2-type 10" evidence="3">
    <location>
        <begin position="461"/>
        <end position="483"/>
    </location>
</feature>
<feature type="zinc finger region" description="C2H2-type 11" evidence="3">
    <location>
        <begin position="489"/>
        <end position="511"/>
    </location>
</feature>
<feature type="zinc finger region" description="C2H2-type 12" evidence="3">
    <location>
        <begin position="517"/>
        <end position="539"/>
    </location>
</feature>
<feature type="zinc finger region" description="C2H2-type 13" evidence="3">
    <location>
        <begin position="545"/>
        <end position="567"/>
    </location>
</feature>
<feature type="zinc finger region" description="C2H2-type 14" evidence="3">
    <location>
        <begin position="573"/>
        <end position="595"/>
    </location>
</feature>
<feature type="zinc finger region" description="C2H2-type 15" evidence="3">
    <location>
        <begin position="601"/>
        <end position="623"/>
    </location>
</feature>
<feature type="zinc finger region" description="C2H2-type 16" evidence="3">
    <location>
        <begin position="629"/>
        <end position="651"/>
    </location>
</feature>
<feature type="zinc finger region" description="C2H2-type 17" evidence="3">
    <location>
        <begin position="657"/>
        <end position="679"/>
    </location>
</feature>
<feature type="region of interest" description="Disordered" evidence="4">
    <location>
        <begin position="1"/>
        <end position="33"/>
    </location>
</feature>
<feature type="region of interest" description="Necessary for transcription activation" evidence="1">
    <location>
        <begin position="62"/>
        <end position="210"/>
    </location>
</feature>
<feature type="region of interest" description="Disordered" evidence="4">
    <location>
        <begin position="112"/>
        <end position="134"/>
    </location>
</feature>
<feature type="region of interest" description="Required for nuclear localization" evidence="1">
    <location>
        <begin position="268"/>
        <end position="393"/>
    </location>
</feature>
<feature type="region of interest" description="Required for nuclear localization" evidence="1">
    <location>
        <begin position="341"/>
        <end position="373"/>
    </location>
</feature>
<feature type="region of interest" description="Required for nuclear localization" evidence="1">
    <location>
        <begin position="473"/>
        <end position="503"/>
    </location>
</feature>
<feature type="compositionally biased region" description="Basic and acidic residues" evidence="4">
    <location>
        <begin position="1"/>
        <end position="10"/>
    </location>
</feature>
<feature type="compositionally biased region" description="Basic and acidic residues" evidence="4">
    <location>
        <begin position="113"/>
        <end position="125"/>
    </location>
</feature>
<feature type="modified residue" description="N6-acetyllysine" evidence="2">
    <location>
        <position position="487"/>
    </location>
</feature>
<feature type="cross-link" description="Glycyl lysine isopeptide (Lys-Gly) (interchain with G-Cter in SUMO2)" evidence="2">
    <location>
        <position position="253"/>
    </location>
</feature>
<organism>
    <name type="scientific">Gorilla gorilla gorilla</name>
    <name type="common">Western lowland gorilla</name>
    <dbReference type="NCBI Taxonomy" id="9595"/>
    <lineage>
        <taxon>Eukaryota</taxon>
        <taxon>Metazoa</taxon>
        <taxon>Chordata</taxon>
        <taxon>Craniata</taxon>
        <taxon>Vertebrata</taxon>
        <taxon>Euteleostomi</taxon>
        <taxon>Mammalia</taxon>
        <taxon>Eutheria</taxon>
        <taxon>Euarchontoglires</taxon>
        <taxon>Primates</taxon>
        <taxon>Haplorrhini</taxon>
        <taxon>Catarrhini</taxon>
        <taxon>Hominidae</taxon>
        <taxon>Gorilla</taxon>
    </lineage>
</organism>
<proteinExistence type="inferred from homology"/>
<name>ZNF16_GORGO</name>
<reference key="1">
    <citation type="submission" date="2006-08" db="EMBL/GenBank/DDBJ databases">
        <title>Positive selection in transcription factor genes on the human lineage.</title>
        <authorList>
            <person name="Nickel G.C."/>
            <person name="Tefft D.L."/>
            <person name="Trevarthen K."/>
            <person name="Funt J."/>
            <person name="Adams M.D."/>
        </authorList>
    </citation>
    <scope>NUCLEOTIDE SEQUENCE [GENOMIC DNA]</scope>
</reference>
<evidence type="ECO:0000250" key="1"/>
<evidence type="ECO:0000250" key="2">
    <source>
        <dbReference type="UniProtKB" id="P17020"/>
    </source>
</evidence>
<evidence type="ECO:0000255" key="3">
    <source>
        <dbReference type="PROSITE-ProRule" id="PRU00042"/>
    </source>
</evidence>
<evidence type="ECO:0000256" key="4">
    <source>
        <dbReference type="SAM" id="MobiDB-lite"/>
    </source>
</evidence>
<evidence type="ECO:0000305" key="5"/>
<sequence length="682" mass="76323">MPSLRTRREEAEMELSAPGPSPWTPAAQAHVSDAPAVTHPGSAACGTPCCSDTELEAICPHYQQPDCDTRTEDKEFLHKEDIHEDLESQAEISENYAGDVLQVPELGDLCDDVSERDWGVPEGRRLPQSLSQEGDFTPAAMGLLRGPLGEKDLDCNGFDSRFSLSPNLMACQEIPTEERPHPYDMGGQSFQHSVDLTGHEGVPTAESPLICNECGKTFQGNPDLIQCQIVHTGEASFMCDDCGKTFSQNSVLKNHHRSHMSEKAYQCSECGKAFRGHSDFSRHQSHHSSERPYMCNECGKAFSQNSSLKKHQKSHMSEKPYECNECGKAFRRSSNLIQHQRIHSGEKPYVCSECGKAFRRSSNLIKHHRTHTGEKPFECGECGKAFSQSAHLRKHQRVHTGEKPYECNDCGKPFSRVSNLIKHHRVHTGEKPYKCSDCGKAFSQSSSLIQHRRIHTGEKPHVCNICGKAFSYSSVLRKHQIIHTGEKPYRCSVCGKAFSHSSALIQHQGVHTGDKPYACHECGKTFGRSSNLILHQRVHTGEKPYECTECGKTFSQSSTLIQHQRIHNGLKPHECNQCGKAFNRSSNLIHHQKVHTGEKPYTCVECGKGFSQSSHLIQHQIIHTGERPYKCSECGKAFSQRSVLIQHQRIHTGVKPYDCAACGKAFSQRSKLIKHQLIHTRE</sequence>
<keyword id="KW-0007">Acetylation</keyword>
<keyword id="KW-0010">Activator</keyword>
<keyword id="KW-0131">Cell cycle</keyword>
<keyword id="KW-0132">Cell division</keyword>
<keyword id="KW-0238">DNA-binding</keyword>
<keyword id="KW-1017">Isopeptide bond</keyword>
<keyword id="KW-0479">Metal-binding</keyword>
<keyword id="KW-0497">Mitogen</keyword>
<keyword id="KW-0539">Nucleus</keyword>
<keyword id="KW-1185">Reference proteome</keyword>
<keyword id="KW-0677">Repeat</keyword>
<keyword id="KW-0804">Transcription</keyword>
<keyword id="KW-0805">Transcription regulation</keyword>
<keyword id="KW-0832">Ubl conjugation</keyword>
<keyword id="KW-0862">Zinc</keyword>
<keyword id="KW-0863">Zinc-finger</keyword>